<gene>
    <name evidence="1" type="primary">gpmB</name>
    <name type="ordered locus">STY4932</name>
    <name type="ordered locus">t4624</name>
</gene>
<protein>
    <recommendedName>
        <fullName evidence="1">Probable phosphoglycerate mutase GpmB</fullName>
        <ecNumber evidence="1">5.4.2.-</ecNumber>
    </recommendedName>
    <alternativeName>
        <fullName evidence="1">PGAM</fullName>
    </alternativeName>
    <alternativeName>
        <fullName evidence="1">Phosphoglyceromutase</fullName>
    </alternativeName>
</protein>
<feature type="chain" id="PRO_0000179950" description="Probable phosphoglycerate mutase GpmB">
    <location>
        <begin position="1"/>
        <end position="215"/>
    </location>
</feature>
<feature type="active site" description="Tele-phosphohistidine intermediate" evidence="1">
    <location>
        <position position="9"/>
    </location>
</feature>
<feature type="active site" description="Proton donor/acceptor" evidence="1">
    <location>
        <position position="82"/>
    </location>
</feature>
<feature type="binding site" evidence="1">
    <location>
        <begin position="8"/>
        <end position="15"/>
    </location>
    <ligand>
        <name>substrate</name>
    </ligand>
</feature>
<feature type="binding site" evidence="1">
    <location>
        <begin position="21"/>
        <end position="22"/>
    </location>
    <ligand>
        <name>substrate</name>
    </ligand>
</feature>
<feature type="binding site" evidence="1">
    <location>
        <position position="58"/>
    </location>
    <ligand>
        <name>substrate</name>
    </ligand>
</feature>
<feature type="binding site" evidence="1">
    <location>
        <position position="60"/>
    </location>
    <ligand>
        <name>substrate</name>
    </ligand>
</feature>
<feature type="binding site" evidence="1">
    <location>
        <begin position="82"/>
        <end position="85"/>
    </location>
    <ligand>
        <name>substrate</name>
    </ligand>
</feature>
<feature type="binding site" evidence="1">
    <location>
        <begin position="104"/>
        <end position="105"/>
    </location>
    <ligand>
        <name>substrate</name>
    </ligand>
</feature>
<feature type="binding site" evidence="1">
    <location>
        <begin position="151"/>
        <end position="152"/>
    </location>
    <ligand>
        <name>substrate</name>
    </ligand>
</feature>
<feature type="site" description="Transition state stabilizer" evidence="1">
    <location>
        <position position="150"/>
    </location>
</feature>
<accession>Q8Z0T4</accession>
<keyword id="KW-0324">Glycolysis</keyword>
<keyword id="KW-0413">Isomerase</keyword>
<comment type="catalytic activity">
    <reaction evidence="1">
        <text>(2R)-2-phosphoglycerate = (2R)-3-phosphoglycerate</text>
        <dbReference type="Rhea" id="RHEA:15901"/>
        <dbReference type="ChEBI" id="CHEBI:58272"/>
        <dbReference type="ChEBI" id="CHEBI:58289"/>
    </reaction>
</comment>
<comment type="pathway">
    <text evidence="1">Carbohydrate degradation; glycolysis; pyruvate from D-glyceraldehyde 3-phosphate: step 3/5.</text>
</comment>
<comment type="similarity">
    <text evidence="1">Belongs to the phosphoglycerate mutase family. GpmB subfamily.</text>
</comment>
<organism>
    <name type="scientific">Salmonella typhi</name>
    <dbReference type="NCBI Taxonomy" id="90370"/>
    <lineage>
        <taxon>Bacteria</taxon>
        <taxon>Pseudomonadati</taxon>
        <taxon>Pseudomonadota</taxon>
        <taxon>Gammaproteobacteria</taxon>
        <taxon>Enterobacterales</taxon>
        <taxon>Enterobacteriaceae</taxon>
        <taxon>Salmonella</taxon>
    </lineage>
</organism>
<dbReference type="EC" id="5.4.2.-" evidence="1"/>
<dbReference type="EMBL" id="AL513382">
    <property type="protein sequence ID" value="CAD03416.1"/>
    <property type="molecule type" value="Genomic_DNA"/>
</dbReference>
<dbReference type="EMBL" id="AE014613">
    <property type="protein sequence ID" value="AAO72055.1"/>
    <property type="molecule type" value="Genomic_DNA"/>
</dbReference>
<dbReference type="RefSeq" id="NP_458992.1">
    <property type="nucleotide sequence ID" value="NC_003198.1"/>
</dbReference>
<dbReference type="RefSeq" id="WP_000942359.1">
    <property type="nucleotide sequence ID" value="NZ_WSUR01000014.1"/>
</dbReference>
<dbReference type="SMR" id="Q8Z0T4"/>
<dbReference type="STRING" id="220341.gene:17588750"/>
<dbReference type="KEGG" id="stt:t4624"/>
<dbReference type="KEGG" id="sty:STY4932"/>
<dbReference type="PATRIC" id="fig|220341.7.peg.5054"/>
<dbReference type="eggNOG" id="COG0406">
    <property type="taxonomic scope" value="Bacteria"/>
</dbReference>
<dbReference type="HOGENOM" id="CLU_033323_9_5_6"/>
<dbReference type="OMA" id="TEWNVAR"/>
<dbReference type="OrthoDB" id="9783269at2"/>
<dbReference type="UniPathway" id="UPA00109">
    <property type="reaction ID" value="UER00186"/>
</dbReference>
<dbReference type="Proteomes" id="UP000000541">
    <property type="component" value="Chromosome"/>
</dbReference>
<dbReference type="Proteomes" id="UP000002670">
    <property type="component" value="Chromosome"/>
</dbReference>
<dbReference type="GO" id="GO:0005737">
    <property type="term" value="C:cytoplasm"/>
    <property type="evidence" value="ECO:0007669"/>
    <property type="project" value="TreeGrafter"/>
</dbReference>
<dbReference type="GO" id="GO:0016791">
    <property type="term" value="F:phosphatase activity"/>
    <property type="evidence" value="ECO:0007669"/>
    <property type="project" value="TreeGrafter"/>
</dbReference>
<dbReference type="GO" id="GO:0004619">
    <property type="term" value="F:phosphoglycerate mutase activity"/>
    <property type="evidence" value="ECO:0007669"/>
    <property type="project" value="UniProtKB-UniRule"/>
</dbReference>
<dbReference type="GO" id="GO:0006096">
    <property type="term" value="P:glycolytic process"/>
    <property type="evidence" value="ECO:0007669"/>
    <property type="project" value="UniProtKB-UniRule"/>
</dbReference>
<dbReference type="CDD" id="cd07067">
    <property type="entry name" value="HP_PGM_like"/>
    <property type="match status" value="1"/>
</dbReference>
<dbReference type="Gene3D" id="3.40.50.1240">
    <property type="entry name" value="Phosphoglycerate mutase-like"/>
    <property type="match status" value="1"/>
</dbReference>
<dbReference type="HAMAP" id="MF_01040">
    <property type="entry name" value="PGAM_GpmB"/>
    <property type="match status" value="1"/>
</dbReference>
<dbReference type="InterPro" id="IPR013078">
    <property type="entry name" value="His_Pase_superF_clade-1"/>
</dbReference>
<dbReference type="InterPro" id="IPR029033">
    <property type="entry name" value="His_PPase_superfam"/>
</dbReference>
<dbReference type="InterPro" id="IPR001345">
    <property type="entry name" value="PG/BPGM_mutase_AS"/>
</dbReference>
<dbReference type="InterPro" id="IPR050275">
    <property type="entry name" value="PGM_Phosphatase"/>
</dbReference>
<dbReference type="InterPro" id="IPR023086">
    <property type="entry name" value="Phosphoglycerate_mutase_GpmB"/>
</dbReference>
<dbReference type="NCBIfam" id="NF002901">
    <property type="entry name" value="PRK03482.1"/>
    <property type="match status" value="1"/>
</dbReference>
<dbReference type="PANTHER" id="PTHR48100">
    <property type="entry name" value="BROAD-SPECIFICITY PHOSPHATASE YOR283W-RELATED"/>
    <property type="match status" value="1"/>
</dbReference>
<dbReference type="PANTHER" id="PTHR48100:SF1">
    <property type="entry name" value="HISTIDINE PHOSPHATASE FAMILY PROTEIN-RELATED"/>
    <property type="match status" value="1"/>
</dbReference>
<dbReference type="Pfam" id="PF00300">
    <property type="entry name" value="His_Phos_1"/>
    <property type="match status" value="1"/>
</dbReference>
<dbReference type="SMART" id="SM00855">
    <property type="entry name" value="PGAM"/>
    <property type="match status" value="1"/>
</dbReference>
<dbReference type="SUPFAM" id="SSF53254">
    <property type="entry name" value="Phosphoglycerate mutase-like"/>
    <property type="match status" value="1"/>
</dbReference>
<dbReference type="PROSITE" id="PS00175">
    <property type="entry name" value="PG_MUTASE"/>
    <property type="match status" value="1"/>
</dbReference>
<reference key="1">
    <citation type="journal article" date="2001" name="Nature">
        <title>Complete genome sequence of a multiple drug resistant Salmonella enterica serovar Typhi CT18.</title>
        <authorList>
            <person name="Parkhill J."/>
            <person name="Dougan G."/>
            <person name="James K.D."/>
            <person name="Thomson N.R."/>
            <person name="Pickard D."/>
            <person name="Wain J."/>
            <person name="Churcher C.M."/>
            <person name="Mungall K.L."/>
            <person name="Bentley S.D."/>
            <person name="Holden M.T.G."/>
            <person name="Sebaihia M."/>
            <person name="Baker S."/>
            <person name="Basham D."/>
            <person name="Brooks K."/>
            <person name="Chillingworth T."/>
            <person name="Connerton P."/>
            <person name="Cronin A."/>
            <person name="Davis P."/>
            <person name="Davies R.M."/>
            <person name="Dowd L."/>
            <person name="White N."/>
            <person name="Farrar J."/>
            <person name="Feltwell T."/>
            <person name="Hamlin N."/>
            <person name="Haque A."/>
            <person name="Hien T.T."/>
            <person name="Holroyd S."/>
            <person name="Jagels K."/>
            <person name="Krogh A."/>
            <person name="Larsen T.S."/>
            <person name="Leather S."/>
            <person name="Moule S."/>
            <person name="O'Gaora P."/>
            <person name="Parry C."/>
            <person name="Quail M.A."/>
            <person name="Rutherford K.M."/>
            <person name="Simmonds M."/>
            <person name="Skelton J."/>
            <person name="Stevens K."/>
            <person name="Whitehead S."/>
            <person name="Barrell B.G."/>
        </authorList>
    </citation>
    <scope>NUCLEOTIDE SEQUENCE [LARGE SCALE GENOMIC DNA]</scope>
    <source>
        <strain>CT18</strain>
    </source>
</reference>
<reference key="2">
    <citation type="journal article" date="2003" name="J. Bacteriol.">
        <title>Comparative genomics of Salmonella enterica serovar Typhi strains Ty2 and CT18.</title>
        <authorList>
            <person name="Deng W."/>
            <person name="Liou S.-R."/>
            <person name="Plunkett G. III"/>
            <person name="Mayhew G.F."/>
            <person name="Rose D.J."/>
            <person name="Burland V."/>
            <person name="Kodoyianni V."/>
            <person name="Schwartz D.C."/>
            <person name="Blattner F.R."/>
        </authorList>
    </citation>
    <scope>NUCLEOTIDE SEQUENCE [LARGE SCALE GENOMIC DNA]</scope>
    <source>
        <strain>ATCC 700931 / Ty2</strain>
    </source>
</reference>
<sequence length="215" mass="23958">MLQVYLVRHGETQWNAERRIQGQSDSPLTAKGEQQAMQVGERARSLGITHIISSDLGRTKRTAEIIAQACGCDITFDFRLRELDMGVLEKRQIDSLTEEEEGWRRQLVNGTQDGRIPGGESMQELSDRVHAALASCLELPQGSRPLLVSHGIALGCLVSTILGLPAWAERRLRLRNCSISRIDYQESQWLASGWVVETAGDVSHLDTPALDELQR</sequence>
<name>GPMB_SALTI</name>
<proteinExistence type="inferred from homology"/>
<evidence type="ECO:0000255" key="1">
    <source>
        <dbReference type="HAMAP-Rule" id="MF_01040"/>
    </source>
</evidence>